<reference key="1">
    <citation type="journal article" date="2004" name="Nat. Genet.">
        <title>Comparison of genome degradation in Paratyphi A and Typhi, human-restricted serovars of Salmonella enterica that cause typhoid.</title>
        <authorList>
            <person name="McClelland M."/>
            <person name="Sanderson K.E."/>
            <person name="Clifton S.W."/>
            <person name="Latreille P."/>
            <person name="Porwollik S."/>
            <person name="Sabo A."/>
            <person name="Meyer R."/>
            <person name="Bieri T."/>
            <person name="Ozersky P."/>
            <person name="McLellan M."/>
            <person name="Harkins C.R."/>
            <person name="Wang C."/>
            <person name="Nguyen C."/>
            <person name="Berghoff A."/>
            <person name="Elliott G."/>
            <person name="Kohlberg S."/>
            <person name="Strong C."/>
            <person name="Du F."/>
            <person name="Carter J."/>
            <person name="Kremizki C."/>
            <person name="Layman D."/>
            <person name="Leonard S."/>
            <person name="Sun H."/>
            <person name="Fulton L."/>
            <person name="Nash W."/>
            <person name="Miner T."/>
            <person name="Minx P."/>
            <person name="Delehaunty K."/>
            <person name="Fronick C."/>
            <person name="Magrini V."/>
            <person name="Nhan M."/>
            <person name="Warren W."/>
            <person name="Florea L."/>
            <person name="Spieth J."/>
            <person name="Wilson R.K."/>
        </authorList>
    </citation>
    <scope>NUCLEOTIDE SEQUENCE [LARGE SCALE GENOMIC DNA]</scope>
    <source>
        <strain>ATCC 9150 / SARB42</strain>
    </source>
</reference>
<evidence type="ECO:0000255" key="1">
    <source>
        <dbReference type="HAMAP-Rule" id="MF_01640"/>
    </source>
</evidence>
<keyword id="KW-0963">Cytoplasm</keyword>
<keyword id="KW-0520">NAD</keyword>
<keyword id="KW-0560">Oxidoreductase</keyword>
<keyword id="KW-0664">Pyridoxine biosynthesis</keyword>
<comment type="function">
    <text evidence="1">Catalyzes the NAD-dependent conversion of D-erythrose 4-phosphate to 4-phosphoerythronate.</text>
</comment>
<comment type="catalytic activity">
    <reaction evidence="1">
        <text>D-erythrose 4-phosphate + NAD(+) + H2O = 4-phospho-D-erythronate + NADH + 2 H(+)</text>
        <dbReference type="Rhea" id="RHEA:12056"/>
        <dbReference type="ChEBI" id="CHEBI:15377"/>
        <dbReference type="ChEBI" id="CHEBI:15378"/>
        <dbReference type="ChEBI" id="CHEBI:16897"/>
        <dbReference type="ChEBI" id="CHEBI:57540"/>
        <dbReference type="ChEBI" id="CHEBI:57945"/>
        <dbReference type="ChEBI" id="CHEBI:58766"/>
        <dbReference type="EC" id="1.2.1.72"/>
    </reaction>
</comment>
<comment type="pathway">
    <text evidence="1">Cofactor biosynthesis; pyridoxine 5'-phosphate biosynthesis; pyridoxine 5'-phosphate from D-erythrose 4-phosphate: step 1/5.</text>
</comment>
<comment type="subunit">
    <text evidence="1">Homotetramer.</text>
</comment>
<comment type="subcellular location">
    <subcellularLocation>
        <location evidence="1">Cytoplasm</location>
    </subcellularLocation>
</comment>
<comment type="similarity">
    <text evidence="1">Belongs to the glyceraldehyde-3-phosphate dehydrogenase family. Epd subfamily.</text>
</comment>
<proteinExistence type="inferred from homology"/>
<accession>Q5PJI5</accession>
<protein>
    <recommendedName>
        <fullName evidence="1">D-erythrose-4-phosphate dehydrogenase</fullName>
        <shortName evidence="1">E4PDH</shortName>
        <ecNumber evidence="1">1.2.1.72</ecNumber>
    </recommendedName>
</protein>
<feature type="chain" id="PRO_0000293157" description="D-erythrose-4-phosphate dehydrogenase">
    <location>
        <begin position="1"/>
        <end position="348"/>
    </location>
</feature>
<feature type="active site" description="Nucleophile" evidence="1">
    <location>
        <position position="155"/>
    </location>
</feature>
<feature type="binding site" evidence="1">
    <location>
        <begin position="12"/>
        <end position="13"/>
    </location>
    <ligand>
        <name>NAD(+)</name>
        <dbReference type="ChEBI" id="CHEBI:57540"/>
    </ligand>
</feature>
<feature type="binding site" evidence="1">
    <location>
        <position position="81"/>
    </location>
    <ligand>
        <name>NAD(+)</name>
        <dbReference type="ChEBI" id="CHEBI:57540"/>
    </ligand>
</feature>
<feature type="binding site" evidence="1">
    <location>
        <begin position="154"/>
        <end position="156"/>
    </location>
    <ligand>
        <name>substrate</name>
    </ligand>
</feature>
<feature type="binding site" evidence="1">
    <location>
        <position position="200"/>
    </location>
    <ligand>
        <name>substrate</name>
    </ligand>
</feature>
<feature type="binding site" evidence="1">
    <location>
        <begin position="213"/>
        <end position="214"/>
    </location>
    <ligand>
        <name>substrate</name>
    </ligand>
</feature>
<feature type="binding site" evidence="1">
    <location>
        <position position="236"/>
    </location>
    <ligand>
        <name>substrate</name>
    </ligand>
</feature>
<feature type="binding site" evidence="1">
    <location>
        <position position="318"/>
    </location>
    <ligand>
        <name>NAD(+)</name>
        <dbReference type="ChEBI" id="CHEBI:57540"/>
    </ligand>
</feature>
<feature type="site" description="Activates thiol group during catalysis" evidence="1">
    <location>
        <position position="182"/>
    </location>
</feature>
<dbReference type="EC" id="1.2.1.72" evidence="1"/>
<dbReference type="EMBL" id="CP000026">
    <property type="protein sequence ID" value="AAV78779.1"/>
    <property type="molecule type" value="Genomic_DNA"/>
</dbReference>
<dbReference type="RefSeq" id="WP_000218331.1">
    <property type="nucleotide sequence ID" value="NC_006511.1"/>
</dbReference>
<dbReference type="SMR" id="Q5PJI5"/>
<dbReference type="KEGG" id="spt:SPA2941"/>
<dbReference type="HOGENOM" id="CLU_030140_0_0_6"/>
<dbReference type="UniPathway" id="UPA00244">
    <property type="reaction ID" value="UER00309"/>
</dbReference>
<dbReference type="Proteomes" id="UP000008185">
    <property type="component" value="Chromosome"/>
</dbReference>
<dbReference type="GO" id="GO:0005737">
    <property type="term" value="C:cytoplasm"/>
    <property type="evidence" value="ECO:0007669"/>
    <property type="project" value="UniProtKB-SubCell"/>
</dbReference>
<dbReference type="GO" id="GO:0048001">
    <property type="term" value="F:erythrose-4-phosphate dehydrogenase activity"/>
    <property type="evidence" value="ECO:0007669"/>
    <property type="project" value="UniProtKB-UniRule"/>
</dbReference>
<dbReference type="GO" id="GO:0051287">
    <property type="term" value="F:NAD binding"/>
    <property type="evidence" value="ECO:0007669"/>
    <property type="project" value="InterPro"/>
</dbReference>
<dbReference type="GO" id="GO:0050661">
    <property type="term" value="F:NADP binding"/>
    <property type="evidence" value="ECO:0007669"/>
    <property type="project" value="InterPro"/>
</dbReference>
<dbReference type="GO" id="GO:0006006">
    <property type="term" value="P:glucose metabolic process"/>
    <property type="evidence" value="ECO:0007669"/>
    <property type="project" value="InterPro"/>
</dbReference>
<dbReference type="GO" id="GO:0042823">
    <property type="term" value="P:pyridoxal phosphate biosynthetic process"/>
    <property type="evidence" value="ECO:0007669"/>
    <property type="project" value="UniProtKB-UniRule"/>
</dbReference>
<dbReference type="GO" id="GO:0008615">
    <property type="term" value="P:pyridoxine biosynthetic process"/>
    <property type="evidence" value="ECO:0007669"/>
    <property type="project" value="UniProtKB-UniRule"/>
</dbReference>
<dbReference type="CDD" id="cd23937">
    <property type="entry name" value="GAPDH_C_E4PDH"/>
    <property type="match status" value="1"/>
</dbReference>
<dbReference type="CDD" id="cd17892">
    <property type="entry name" value="GAPDH_N_E4PDH"/>
    <property type="match status" value="1"/>
</dbReference>
<dbReference type="FunFam" id="3.30.360.10:FF:000007">
    <property type="entry name" value="D-erythrose-4-phosphate dehydrogenase"/>
    <property type="match status" value="1"/>
</dbReference>
<dbReference type="FunFam" id="3.40.50.720:FF:000001">
    <property type="entry name" value="Glyceraldehyde-3-phosphate dehydrogenase"/>
    <property type="match status" value="1"/>
</dbReference>
<dbReference type="Gene3D" id="3.30.360.10">
    <property type="entry name" value="Dihydrodipicolinate Reductase, domain 2"/>
    <property type="match status" value="1"/>
</dbReference>
<dbReference type="Gene3D" id="3.40.50.720">
    <property type="entry name" value="NAD(P)-binding Rossmann-like Domain"/>
    <property type="match status" value="1"/>
</dbReference>
<dbReference type="HAMAP" id="MF_01640">
    <property type="entry name" value="E4P_dehydrog"/>
    <property type="match status" value="1"/>
</dbReference>
<dbReference type="InterPro" id="IPR006422">
    <property type="entry name" value="E4P_DH_bac"/>
</dbReference>
<dbReference type="InterPro" id="IPR020831">
    <property type="entry name" value="GlycerAld/Erythrose_P_DH"/>
</dbReference>
<dbReference type="InterPro" id="IPR020830">
    <property type="entry name" value="GlycerAld_3-P_DH_AS"/>
</dbReference>
<dbReference type="InterPro" id="IPR020829">
    <property type="entry name" value="GlycerAld_3-P_DH_cat"/>
</dbReference>
<dbReference type="InterPro" id="IPR020828">
    <property type="entry name" value="GlycerAld_3-P_DH_NAD(P)-bd"/>
</dbReference>
<dbReference type="InterPro" id="IPR006424">
    <property type="entry name" value="Glyceraldehyde-3-P_DH_1"/>
</dbReference>
<dbReference type="InterPro" id="IPR036291">
    <property type="entry name" value="NAD(P)-bd_dom_sf"/>
</dbReference>
<dbReference type="NCBIfam" id="TIGR01532">
    <property type="entry name" value="E4PD_g-proteo"/>
    <property type="match status" value="1"/>
</dbReference>
<dbReference type="NCBIfam" id="TIGR01534">
    <property type="entry name" value="GAPDH-I"/>
    <property type="match status" value="1"/>
</dbReference>
<dbReference type="NCBIfam" id="NF010058">
    <property type="entry name" value="PRK13535.1"/>
    <property type="match status" value="1"/>
</dbReference>
<dbReference type="PANTHER" id="PTHR43148">
    <property type="entry name" value="GLYCERALDEHYDE-3-PHOSPHATE DEHYDROGENASE 2"/>
    <property type="match status" value="1"/>
</dbReference>
<dbReference type="Pfam" id="PF02800">
    <property type="entry name" value="Gp_dh_C"/>
    <property type="match status" value="1"/>
</dbReference>
<dbReference type="Pfam" id="PF00044">
    <property type="entry name" value="Gp_dh_N"/>
    <property type="match status" value="1"/>
</dbReference>
<dbReference type="PIRSF" id="PIRSF000149">
    <property type="entry name" value="GAP_DH"/>
    <property type="match status" value="1"/>
</dbReference>
<dbReference type="PRINTS" id="PR00078">
    <property type="entry name" value="G3PDHDRGNASE"/>
</dbReference>
<dbReference type="SMART" id="SM00846">
    <property type="entry name" value="Gp_dh_N"/>
    <property type="match status" value="1"/>
</dbReference>
<dbReference type="SUPFAM" id="SSF55347">
    <property type="entry name" value="Glyceraldehyde-3-phosphate dehydrogenase-like, C-terminal domain"/>
    <property type="match status" value="1"/>
</dbReference>
<dbReference type="SUPFAM" id="SSF51735">
    <property type="entry name" value="NAD(P)-binding Rossmann-fold domains"/>
    <property type="match status" value="1"/>
</dbReference>
<dbReference type="PROSITE" id="PS00071">
    <property type="entry name" value="GAPDH"/>
    <property type="match status" value="1"/>
</dbReference>
<gene>
    <name evidence="1" type="primary">epd</name>
    <name type="ordered locus">SPA2941</name>
</gene>
<sequence length="348" mass="38125">MTVRIAINGFGRIGRNVVRALYESGRRAEITVVAINELADAAGMAHLLKYDTSHGRFAWEVRHEREQLFVGDDVIRILHERTLADLPWRELGVDVVLDCTGVYGNQEHGEAHIAAGAKKVLFSHPGSNDLDATVVFGVNQNQLRAEHRIVSNASCTTNCIIPVIKLLDDAYGIESGTVTAIHSAMNDQQVIDAYHSDLRRTRAASQSIIPVDTKLAAGITRIFPQFNDRFEAIAVRVPTINVTAIDLSVTVKKPVKASEVNQLLQKAAQGAFHGIVDYTESPLVSIDFNHDPHSAIVDGTQTRVSGAHLIKTLVWCDNEWGFANRMLDTTLAMAAVDFRLDASASTKL</sequence>
<organism>
    <name type="scientific">Salmonella paratyphi A (strain ATCC 9150 / SARB42)</name>
    <dbReference type="NCBI Taxonomy" id="295319"/>
    <lineage>
        <taxon>Bacteria</taxon>
        <taxon>Pseudomonadati</taxon>
        <taxon>Pseudomonadota</taxon>
        <taxon>Gammaproteobacteria</taxon>
        <taxon>Enterobacterales</taxon>
        <taxon>Enterobacteriaceae</taxon>
        <taxon>Salmonella</taxon>
    </lineage>
</organism>
<name>E4PD_SALPA</name>